<name>MNME_SYNAS</name>
<accession>Q2LSF6</accession>
<organism>
    <name type="scientific">Syntrophus aciditrophicus (strain SB)</name>
    <dbReference type="NCBI Taxonomy" id="56780"/>
    <lineage>
        <taxon>Bacteria</taxon>
        <taxon>Pseudomonadati</taxon>
        <taxon>Thermodesulfobacteriota</taxon>
        <taxon>Syntrophia</taxon>
        <taxon>Syntrophales</taxon>
        <taxon>Syntrophaceae</taxon>
        <taxon>Syntrophus</taxon>
    </lineage>
</organism>
<gene>
    <name evidence="1" type="primary">mnmE</name>
    <name evidence="1" type="synonym">trmE</name>
    <name type="ordered locus">SYNAS_11380</name>
    <name type="ORF">SYN_01016</name>
</gene>
<proteinExistence type="inferred from homology"/>
<protein>
    <recommendedName>
        <fullName evidence="1">tRNA modification GTPase MnmE</fullName>
        <ecNumber evidence="1">3.6.-.-</ecNumber>
    </recommendedName>
</protein>
<reference key="1">
    <citation type="journal article" date="2007" name="Proc. Natl. Acad. Sci. U.S.A.">
        <title>The genome of Syntrophus aciditrophicus: life at the thermodynamic limit of microbial growth.</title>
        <authorList>
            <person name="McInerney M.J."/>
            <person name="Rohlin L."/>
            <person name="Mouttaki H."/>
            <person name="Kim U."/>
            <person name="Krupp R.S."/>
            <person name="Rios-Hernandez L."/>
            <person name="Sieber J."/>
            <person name="Struchtemeyer C.G."/>
            <person name="Bhattacharyya A."/>
            <person name="Campbell J.W."/>
            <person name="Gunsalus R.P."/>
        </authorList>
    </citation>
    <scope>NUCLEOTIDE SEQUENCE [LARGE SCALE GENOMIC DNA]</scope>
    <source>
        <strain>SB</strain>
    </source>
</reference>
<comment type="function">
    <text evidence="1">Exhibits a very high intrinsic GTPase hydrolysis rate. Involved in the addition of a carboxymethylaminomethyl (cmnm) group at the wobble position (U34) of certain tRNAs, forming tRNA-cmnm(5)s(2)U34.</text>
</comment>
<comment type="cofactor">
    <cofactor evidence="1">
        <name>K(+)</name>
        <dbReference type="ChEBI" id="CHEBI:29103"/>
    </cofactor>
    <text evidence="1">Binds 1 potassium ion per subunit.</text>
</comment>
<comment type="subunit">
    <text evidence="1">Homodimer. Heterotetramer of two MnmE and two MnmG subunits.</text>
</comment>
<comment type="subcellular location">
    <subcellularLocation>
        <location evidence="1">Cytoplasm</location>
    </subcellularLocation>
</comment>
<comment type="similarity">
    <text evidence="1">Belongs to the TRAFAC class TrmE-Era-EngA-EngB-Septin-like GTPase superfamily. TrmE GTPase family.</text>
</comment>
<evidence type="ECO:0000255" key="1">
    <source>
        <dbReference type="HAMAP-Rule" id="MF_00379"/>
    </source>
</evidence>
<sequence>MLKDTIAAIATPAGTGGIGIVRISGSEAASILNLLFKSSHSVTLFKPRYLYHGDLSDPQTGQVIDEVLVSLMKAPRSYTGEDTLEIYCHGGILVLESVLLAVLRSGARLADPGEFTRRAFLNDRIDLTQAEAVGDVIMARTSKGLEAAVSHLKGQLKQKIDSLRDELIDVQVLLESAIDFTEDVEFPSPSEVLSKLERLSSDLEALLSTYDQGKVYRHGATVVIAGKPNTGKSSLLNCLLQEKRAIVTPVPGTTRDFIEEAISIQGVSVRMIDTAGIHPTDDLIECEGIRMVWEKLATADGVILLLDGSKDLTDEDRKILKRLQGYNLLPVINKADLDHSLKEEDIIACFPGTDPLWVSAKFGEGIAVLKEKIYDLVLEKAGEQDGDVLINSLRHKMALEKTRQQVSQALASLQEGLSQEFAALDIREALEALGEIAGETVTEDILDRIFSSFCIGK</sequence>
<dbReference type="EC" id="3.6.-.-" evidence="1"/>
<dbReference type="EMBL" id="CP000252">
    <property type="protein sequence ID" value="ABC77017.1"/>
    <property type="molecule type" value="Genomic_DNA"/>
</dbReference>
<dbReference type="RefSeq" id="WP_011417046.1">
    <property type="nucleotide sequence ID" value="NC_007759.1"/>
</dbReference>
<dbReference type="SMR" id="Q2LSF6"/>
<dbReference type="FunCoup" id="Q2LSF6">
    <property type="interactions" value="478"/>
</dbReference>
<dbReference type="STRING" id="56780.SYN_01016"/>
<dbReference type="KEGG" id="sat:SYN_01016"/>
<dbReference type="eggNOG" id="COG0486">
    <property type="taxonomic scope" value="Bacteria"/>
</dbReference>
<dbReference type="HOGENOM" id="CLU_019624_4_1_7"/>
<dbReference type="InParanoid" id="Q2LSF6"/>
<dbReference type="OrthoDB" id="9805918at2"/>
<dbReference type="Proteomes" id="UP000001933">
    <property type="component" value="Chromosome"/>
</dbReference>
<dbReference type="GO" id="GO:0005829">
    <property type="term" value="C:cytosol"/>
    <property type="evidence" value="ECO:0007669"/>
    <property type="project" value="TreeGrafter"/>
</dbReference>
<dbReference type="GO" id="GO:0005525">
    <property type="term" value="F:GTP binding"/>
    <property type="evidence" value="ECO:0007669"/>
    <property type="project" value="UniProtKB-UniRule"/>
</dbReference>
<dbReference type="GO" id="GO:0003924">
    <property type="term" value="F:GTPase activity"/>
    <property type="evidence" value="ECO:0007669"/>
    <property type="project" value="UniProtKB-UniRule"/>
</dbReference>
<dbReference type="GO" id="GO:0046872">
    <property type="term" value="F:metal ion binding"/>
    <property type="evidence" value="ECO:0007669"/>
    <property type="project" value="UniProtKB-KW"/>
</dbReference>
<dbReference type="GO" id="GO:0030488">
    <property type="term" value="P:tRNA methylation"/>
    <property type="evidence" value="ECO:0007669"/>
    <property type="project" value="TreeGrafter"/>
</dbReference>
<dbReference type="GO" id="GO:0002098">
    <property type="term" value="P:tRNA wobble uridine modification"/>
    <property type="evidence" value="ECO:0007669"/>
    <property type="project" value="TreeGrafter"/>
</dbReference>
<dbReference type="CDD" id="cd04164">
    <property type="entry name" value="trmE"/>
    <property type="match status" value="1"/>
</dbReference>
<dbReference type="CDD" id="cd14858">
    <property type="entry name" value="TrmE_N"/>
    <property type="match status" value="1"/>
</dbReference>
<dbReference type="FunFam" id="3.30.1360.120:FF:000003">
    <property type="entry name" value="tRNA modification GTPase MnmE"/>
    <property type="match status" value="1"/>
</dbReference>
<dbReference type="Gene3D" id="3.40.50.300">
    <property type="entry name" value="P-loop containing nucleotide triphosphate hydrolases"/>
    <property type="match status" value="1"/>
</dbReference>
<dbReference type="Gene3D" id="3.30.1360.120">
    <property type="entry name" value="Probable tRNA modification gtpase trme, domain 1"/>
    <property type="match status" value="1"/>
</dbReference>
<dbReference type="Gene3D" id="1.20.120.430">
    <property type="entry name" value="tRNA modification GTPase MnmE domain 2"/>
    <property type="match status" value="1"/>
</dbReference>
<dbReference type="HAMAP" id="MF_00379">
    <property type="entry name" value="GTPase_MnmE"/>
    <property type="match status" value="1"/>
</dbReference>
<dbReference type="InterPro" id="IPR031168">
    <property type="entry name" value="G_TrmE"/>
</dbReference>
<dbReference type="InterPro" id="IPR006073">
    <property type="entry name" value="GTP-bd"/>
</dbReference>
<dbReference type="InterPro" id="IPR018948">
    <property type="entry name" value="GTP-bd_TrmE_N"/>
</dbReference>
<dbReference type="InterPro" id="IPR004520">
    <property type="entry name" value="GTPase_MnmE"/>
</dbReference>
<dbReference type="InterPro" id="IPR027368">
    <property type="entry name" value="MnmE_dom2"/>
</dbReference>
<dbReference type="InterPro" id="IPR025867">
    <property type="entry name" value="MnmE_helical"/>
</dbReference>
<dbReference type="InterPro" id="IPR027417">
    <property type="entry name" value="P-loop_NTPase"/>
</dbReference>
<dbReference type="InterPro" id="IPR005225">
    <property type="entry name" value="Small_GTP-bd"/>
</dbReference>
<dbReference type="InterPro" id="IPR027266">
    <property type="entry name" value="TrmE/GcvT_dom1"/>
</dbReference>
<dbReference type="NCBIfam" id="TIGR00450">
    <property type="entry name" value="mnmE_trmE_thdF"/>
    <property type="match status" value="1"/>
</dbReference>
<dbReference type="NCBIfam" id="NF003661">
    <property type="entry name" value="PRK05291.1-3"/>
    <property type="match status" value="1"/>
</dbReference>
<dbReference type="NCBIfam" id="TIGR00231">
    <property type="entry name" value="small_GTP"/>
    <property type="match status" value="1"/>
</dbReference>
<dbReference type="PANTHER" id="PTHR42714">
    <property type="entry name" value="TRNA MODIFICATION GTPASE GTPBP3"/>
    <property type="match status" value="1"/>
</dbReference>
<dbReference type="PANTHER" id="PTHR42714:SF2">
    <property type="entry name" value="TRNA MODIFICATION GTPASE GTPBP3, MITOCHONDRIAL"/>
    <property type="match status" value="1"/>
</dbReference>
<dbReference type="Pfam" id="PF01926">
    <property type="entry name" value="MMR_HSR1"/>
    <property type="match status" value="1"/>
</dbReference>
<dbReference type="Pfam" id="PF12631">
    <property type="entry name" value="MnmE_helical"/>
    <property type="match status" value="1"/>
</dbReference>
<dbReference type="Pfam" id="PF10396">
    <property type="entry name" value="TrmE_N"/>
    <property type="match status" value="1"/>
</dbReference>
<dbReference type="SUPFAM" id="SSF52540">
    <property type="entry name" value="P-loop containing nucleoside triphosphate hydrolases"/>
    <property type="match status" value="1"/>
</dbReference>
<dbReference type="SUPFAM" id="SSF116878">
    <property type="entry name" value="TrmE connector domain"/>
    <property type="match status" value="1"/>
</dbReference>
<dbReference type="PROSITE" id="PS51709">
    <property type="entry name" value="G_TRME"/>
    <property type="match status" value="1"/>
</dbReference>
<feature type="chain" id="PRO_1000072170" description="tRNA modification GTPase MnmE">
    <location>
        <begin position="1"/>
        <end position="457"/>
    </location>
</feature>
<feature type="domain" description="TrmE-type G">
    <location>
        <begin position="219"/>
        <end position="378"/>
    </location>
</feature>
<feature type="binding site" evidence="1">
    <location>
        <position position="22"/>
    </location>
    <ligand>
        <name>(6S)-5-formyl-5,6,7,8-tetrahydrofolate</name>
        <dbReference type="ChEBI" id="CHEBI:57457"/>
    </ligand>
</feature>
<feature type="binding site" evidence="1">
    <location>
        <position position="85"/>
    </location>
    <ligand>
        <name>(6S)-5-formyl-5,6,7,8-tetrahydrofolate</name>
        <dbReference type="ChEBI" id="CHEBI:57457"/>
    </ligand>
</feature>
<feature type="binding site" evidence="1">
    <location>
        <position position="124"/>
    </location>
    <ligand>
        <name>(6S)-5-formyl-5,6,7,8-tetrahydrofolate</name>
        <dbReference type="ChEBI" id="CHEBI:57457"/>
    </ligand>
</feature>
<feature type="binding site" evidence="1">
    <location>
        <begin position="229"/>
        <end position="234"/>
    </location>
    <ligand>
        <name>GTP</name>
        <dbReference type="ChEBI" id="CHEBI:37565"/>
    </ligand>
</feature>
<feature type="binding site" evidence="1">
    <location>
        <position position="229"/>
    </location>
    <ligand>
        <name>K(+)</name>
        <dbReference type="ChEBI" id="CHEBI:29103"/>
    </ligand>
</feature>
<feature type="binding site" evidence="1">
    <location>
        <position position="233"/>
    </location>
    <ligand>
        <name>Mg(2+)</name>
        <dbReference type="ChEBI" id="CHEBI:18420"/>
    </ligand>
</feature>
<feature type="binding site" evidence="1">
    <location>
        <begin position="248"/>
        <end position="254"/>
    </location>
    <ligand>
        <name>GTP</name>
        <dbReference type="ChEBI" id="CHEBI:37565"/>
    </ligand>
</feature>
<feature type="binding site" evidence="1">
    <location>
        <position position="248"/>
    </location>
    <ligand>
        <name>K(+)</name>
        <dbReference type="ChEBI" id="CHEBI:29103"/>
    </ligand>
</feature>
<feature type="binding site" evidence="1">
    <location>
        <position position="250"/>
    </location>
    <ligand>
        <name>K(+)</name>
        <dbReference type="ChEBI" id="CHEBI:29103"/>
    </ligand>
</feature>
<feature type="binding site" evidence="1">
    <location>
        <position position="253"/>
    </location>
    <ligand>
        <name>K(+)</name>
        <dbReference type="ChEBI" id="CHEBI:29103"/>
    </ligand>
</feature>
<feature type="binding site" evidence="1">
    <location>
        <position position="254"/>
    </location>
    <ligand>
        <name>Mg(2+)</name>
        <dbReference type="ChEBI" id="CHEBI:18420"/>
    </ligand>
</feature>
<feature type="binding site" evidence="1">
    <location>
        <begin position="273"/>
        <end position="276"/>
    </location>
    <ligand>
        <name>GTP</name>
        <dbReference type="ChEBI" id="CHEBI:37565"/>
    </ligand>
</feature>
<feature type="binding site" evidence="1">
    <location>
        <begin position="333"/>
        <end position="336"/>
    </location>
    <ligand>
        <name>GTP</name>
        <dbReference type="ChEBI" id="CHEBI:37565"/>
    </ligand>
</feature>
<feature type="binding site" evidence="1">
    <location>
        <position position="457"/>
    </location>
    <ligand>
        <name>(6S)-5-formyl-5,6,7,8-tetrahydrofolate</name>
        <dbReference type="ChEBI" id="CHEBI:57457"/>
    </ligand>
</feature>
<keyword id="KW-0963">Cytoplasm</keyword>
<keyword id="KW-0342">GTP-binding</keyword>
<keyword id="KW-0378">Hydrolase</keyword>
<keyword id="KW-0460">Magnesium</keyword>
<keyword id="KW-0479">Metal-binding</keyword>
<keyword id="KW-0547">Nucleotide-binding</keyword>
<keyword id="KW-0630">Potassium</keyword>
<keyword id="KW-1185">Reference proteome</keyword>
<keyword id="KW-0819">tRNA processing</keyword>